<dbReference type="EMBL" id="CP001956">
    <property type="protein sequence ID" value="ADE02430.2"/>
    <property type="molecule type" value="Genomic_DNA"/>
</dbReference>
<dbReference type="EMBL" id="AOHU01000041">
    <property type="protein sequence ID" value="ELY33473.1"/>
    <property type="molecule type" value="Genomic_DNA"/>
</dbReference>
<dbReference type="RefSeq" id="WP_004042136.1">
    <property type="nucleotide sequence ID" value="NC_013967.1"/>
</dbReference>
<dbReference type="SMR" id="D4GVW4"/>
<dbReference type="STRING" id="309800.HVO_2248"/>
<dbReference type="PaxDb" id="309800-C498_06513"/>
<dbReference type="EnsemblBacteria" id="ADE02430">
    <property type="protein sequence ID" value="ADE02430"/>
    <property type="gene ID" value="HVO_2248"/>
</dbReference>
<dbReference type="GeneID" id="8926697"/>
<dbReference type="KEGG" id="hvo:HVO_2248"/>
<dbReference type="PATRIC" id="fig|309800.29.peg.1274"/>
<dbReference type="eggNOG" id="arCOG10164">
    <property type="taxonomic scope" value="Archaea"/>
</dbReference>
<dbReference type="OrthoDB" id="258723at2157"/>
<dbReference type="Proteomes" id="UP000008243">
    <property type="component" value="Chromosome"/>
</dbReference>
<dbReference type="Proteomes" id="UP000011532">
    <property type="component" value="Unassembled WGS sequence"/>
</dbReference>
<dbReference type="GO" id="GO:0071975">
    <property type="term" value="P:cell swimming"/>
    <property type="evidence" value="ECO:0000315"/>
    <property type="project" value="UniProtKB"/>
</dbReference>
<dbReference type="InterPro" id="IPR048687">
    <property type="entry name" value="HVO_2248-like"/>
</dbReference>
<dbReference type="Pfam" id="PF21535">
    <property type="entry name" value="HVO_2248"/>
    <property type="match status" value="1"/>
</dbReference>
<proteinExistence type="predicted"/>
<organism evidence="6">
    <name type="scientific">Haloferax volcanii (strain ATCC 29605 / DSM 3757 / JCM 8879 / NBRC 14742 / NCIMB 2012 / VKM B-1768 / DS2)</name>
    <name type="common">Halobacterium volcanii</name>
    <dbReference type="NCBI Taxonomy" id="309800"/>
    <lineage>
        <taxon>Archaea</taxon>
        <taxon>Methanobacteriati</taxon>
        <taxon>Methanobacteriota</taxon>
        <taxon>Stenosarchaea group</taxon>
        <taxon>Halobacteria</taxon>
        <taxon>Halobacteriales</taxon>
        <taxon>Haloferacaceae</taxon>
        <taxon>Haloferax</taxon>
    </lineage>
</organism>
<keyword id="KW-1185">Reference proteome</keyword>
<comment type="function">
    <text evidence="5">May be involved in swimming motility.</text>
</comment>
<comment type="disruption phenotype">
    <text evidence="2">Cells having transposon insertions in this gene are hypermotile.</text>
</comment>
<evidence type="ECO:0000256" key="1">
    <source>
        <dbReference type="SAM" id="MobiDB-lite"/>
    </source>
</evidence>
<evidence type="ECO:0000269" key="2">
    <source>
    </source>
</evidence>
<evidence type="ECO:0000303" key="3">
    <source>
    </source>
</evidence>
<evidence type="ECO:0000305" key="4"/>
<evidence type="ECO:0000305" key="5">
    <source>
    </source>
</evidence>
<evidence type="ECO:0000312" key="6">
    <source>
        <dbReference type="EMBL" id="ADE02430.2"/>
    </source>
</evidence>
<evidence type="ECO:0000312" key="7">
    <source>
        <dbReference type="EMBL" id="ELY33473.1"/>
    </source>
</evidence>
<evidence type="ECO:0000312" key="8">
    <source>
        <dbReference type="Proteomes" id="UP000008243"/>
    </source>
</evidence>
<evidence type="ECO:0000312" key="9">
    <source>
        <dbReference type="Proteomes" id="UP000011532"/>
    </source>
</evidence>
<accession>D4GVW4</accession>
<accession>A0A1U8QXI0</accession>
<accession>A0A384LIQ8</accession>
<accession>L9VAT0</accession>
<gene>
    <name evidence="6" type="ordered locus">HVO_2248</name>
    <name evidence="7" type="ORF">C498_06513</name>
</gene>
<reference evidence="6 8" key="1">
    <citation type="journal article" date="2010" name="PLoS ONE">
        <title>The complete genome sequence of Haloferax volcanii DS2, a model archaeon.</title>
        <authorList>
            <person name="Hartman A.L."/>
            <person name="Norais C."/>
            <person name="Badger J.H."/>
            <person name="Delmas S."/>
            <person name="Haldenby S."/>
            <person name="Madupu R."/>
            <person name="Robinson J."/>
            <person name="Khouri H."/>
            <person name="Ren Q."/>
            <person name="Lowe T.M."/>
            <person name="Maupin-Furlow J."/>
            <person name="Pohlschroder M."/>
            <person name="Daniels C."/>
            <person name="Pfeiffer F."/>
            <person name="Allers T."/>
            <person name="Eisen J.A."/>
        </authorList>
    </citation>
    <scope>NUCLEOTIDE SEQUENCE [LARGE SCALE GENOMIC DNA]</scope>
    <source>
        <strain evidence="8">ATCC 29605 / DSM 3757 / JCM 8879 / NBRC 14742 / NCIMB 2012 / VKM B-1768 / DS2</strain>
    </source>
</reference>
<reference evidence="7 9" key="2">
    <citation type="journal article" date="2014" name="PLoS Genet.">
        <title>Phylogenetically driven sequencing of extremely halophilic archaea reveals strategies for static and dynamic osmo-response.</title>
        <authorList>
            <person name="Becker E.A."/>
            <person name="Seitzer P.M."/>
            <person name="Tritt A."/>
            <person name="Larsen D."/>
            <person name="Krusor M."/>
            <person name="Yao A.I."/>
            <person name="Wu D."/>
            <person name="Madern D."/>
            <person name="Eisen J.A."/>
            <person name="Darling A.E."/>
            <person name="Facciotti M.T."/>
        </authorList>
    </citation>
    <scope>NUCLEOTIDE SEQUENCE [LARGE SCALE GENOMIC DNA]</scope>
    <source>
        <strain evidence="9">ATCC 29605 / DSM 3757 / JCM 8879 / NBRC 14742 / NCIMB 2012 / VKM B-1768 / DS2</strain>
    </source>
</reference>
<reference key="3">
    <citation type="journal article" date="2020" name="Genes (Basel)">
        <title>Mutations Affecting HVO_1357 or HVO_2248 Cause Hypermotility in Haloferax volcanii, Suggesting Roles in Motility Regulation.</title>
        <authorList>
            <person name="Collins M."/>
            <person name="Afolayan S."/>
            <person name="Igiraneza A.B."/>
            <person name="Schiller H."/>
            <person name="Krespan E."/>
            <person name="Beiting D.P."/>
            <person name="Dyall-Smith M."/>
            <person name="Pfeiffer F."/>
            <person name="Pohlschroder M."/>
        </authorList>
    </citation>
    <scope>FUNCTION</scope>
    <scope>DISRUPTION PHENOTYPE</scope>
    <source>
        <strain evidence="3">DS2 / DS70</strain>
    </source>
</reference>
<protein>
    <recommendedName>
        <fullName evidence="4">Uncharacterized motility-related protein HVO_2248</fullName>
    </recommendedName>
</protein>
<name>Y2248_HALVD</name>
<sequence length="271" mass="31361">MSEQRVTFNGDTRVLYRQAVRTPLPNEDAERLFHENMMNIADAQERKADMLADPDISLLEAYETQLEGIAKSYKRRCRHIAGDDYEEIAMAYNRGARDDRVGALTAYYFEGLWRMQQRITVTDMLFFPIILRYPDCFTVNIRFASGHTTTESVLYESPEHSTEELDDEYAERYYNESLYSQKEAAEYIRDTAEIIREEFPSPDESTFEERQYGGITSAGGRKGPVFSSMLKRVEPDPNRFSEPVDQPTLVEEGKEARRTERELLPEGAIVL</sequence>
<feature type="chain" id="PRO_0000454794" description="Uncharacterized motility-related protein HVO_2248">
    <location>
        <begin position="1"/>
        <end position="271"/>
    </location>
</feature>
<feature type="region of interest" description="Disordered" evidence="1">
    <location>
        <begin position="233"/>
        <end position="261"/>
    </location>
</feature>
<feature type="compositionally biased region" description="Basic and acidic residues" evidence="1">
    <location>
        <begin position="251"/>
        <end position="261"/>
    </location>
</feature>